<reference key="1">
    <citation type="journal article" date="1997" name="Nature">
        <title>The complete genome sequence of the Gram-positive bacterium Bacillus subtilis.</title>
        <authorList>
            <person name="Kunst F."/>
            <person name="Ogasawara N."/>
            <person name="Moszer I."/>
            <person name="Albertini A.M."/>
            <person name="Alloni G."/>
            <person name="Azevedo V."/>
            <person name="Bertero M.G."/>
            <person name="Bessieres P."/>
            <person name="Bolotin A."/>
            <person name="Borchert S."/>
            <person name="Borriss R."/>
            <person name="Boursier L."/>
            <person name="Brans A."/>
            <person name="Braun M."/>
            <person name="Brignell S.C."/>
            <person name="Bron S."/>
            <person name="Brouillet S."/>
            <person name="Bruschi C.V."/>
            <person name="Caldwell B."/>
            <person name="Capuano V."/>
            <person name="Carter N.M."/>
            <person name="Choi S.-K."/>
            <person name="Codani J.-J."/>
            <person name="Connerton I.F."/>
            <person name="Cummings N.J."/>
            <person name="Daniel R.A."/>
            <person name="Denizot F."/>
            <person name="Devine K.M."/>
            <person name="Duesterhoeft A."/>
            <person name="Ehrlich S.D."/>
            <person name="Emmerson P.T."/>
            <person name="Entian K.-D."/>
            <person name="Errington J."/>
            <person name="Fabret C."/>
            <person name="Ferrari E."/>
            <person name="Foulger D."/>
            <person name="Fritz C."/>
            <person name="Fujita M."/>
            <person name="Fujita Y."/>
            <person name="Fuma S."/>
            <person name="Galizzi A."/>
            <person name="Galleron N."/>
            <person name="Ghim S.-Y."/>
            <person name="Glaser P."/>
            <person name="Goffeau A."/>
            <person name="Golightly E.J."/>
            <person name="Grandi G."/>
            <person name="Guiseppi G."/>
            <person name="Guy B.J."/>
            <person name="Haga K."/>
            <person name="Haiech J."/>
            <person name="Harwood C.R."/>
            <person name="Henaut A."/>
            <person name="Hilbert H."/>
            <person name="Holsappel S."/>
            <person name="Hosono S."/>
            <person name="Hullo M.-F."/>
            <person name="Itaya M."/>
            <person name="Jones L.-M."/>
            <person name="Joris B."/>
            <person name="Karamata D."/>
            <person name="Kasahara Y."/>
            <person name="Klaerr-Blanchard M."/>
            <person name="Klein C."/>
            <person name="Kobayashi Y."/>
            <person name="Koetter P."/>
            <person name="Koningstein G."/>
            <person name="Krogh S."/>
            <person name="Kumano M."/>
            <person name="Kurita K."/>
            <person name="Lapidus A."/>
            <person name="Lardinois S."/>
            <person name="Lauber J."/>
            <person name="Lazarevic V."/>
            <person name="Lee S.-M."/>
            <person name="Levine A."/>
            <person name="Liu H."/>
            <person name="Masuda S."/>
            <person name="Mauel C."/>
            <person name="Medigue C."/>
            <person name="Medina N."/>
            <person name="Mellado R.P."/>
            <person name="Mizuno M."/>
            <person name="Moestl D."/>
            <person name="Nakai S."/>
            <person name="Noback M."/>
            <person name="Noone D."/>
            <person name="O'Reilly M."/>
            <person name="Ogawa K."/>
            <person name="Ogiwara A."/>
            <person name="Oudega B."/>
            <person name="Park S.-H."/>
            <person name="Parro V."/>
            <person name="Pohl T.M."/>
            <person name="Portetelle D."/>
            <person name="Porwollik S."/>
            <person name="Prescott A.M."/>
            <person name="Presecan E."/>
            <person name="Pujic P."/>
            <person name="Purnelle B."/>
            <person name="Rapoport G."/>
            <person name="Rey M."/>
            <person name="Reynolds S."/>
            <person name="Rieger M."/>
            <person name="Rivolta C."/>
            <person name="Rocha E."/>
            <person name="Roche B."/>
            <person name="Rose M."/>
            <person name="Sadaie Y."/>
            <person name="Sato T."/>
            <person name="Scanlan E."/>
            <person name="Schleich S."/>
            <person name="Schroeter R."/>
            <person name="Scoffone F."/>
            <person name="Sekiguchi J."/>
            <person name="Sekowska A."/>
            <person name="Seror S.J."/>
            <person name="Serror P."/>
            <person name="Shin B.-S."/>
            <person name="Soldo B."/>
            <person name="Sorokin A."/>
            <person name="Tacconi E."/>
            <person name="Takagi T."/>
            <person name="Takahashi H."/>
            <person name="Takemaru K."/>
            <person name="Takeuchi M."/>
            <person name="Tamakoshi A."/>
            <person name="Tanaka T."/>
            <person name="Terpstra P."/>
            <person name="Tognoni A."/>
            <person name="Tosato V."/>
            <person name="Uchiyama S."/>
            <person name="Vandenbol M."/>
            <person name="Vannier F."/>
            <person name="Vassarotti A."/>
            <person name="Viari A."/>
            <person name="Wambutt R."/>
            <person name="Wedler E."/>
            <person name="Wedler H."/>
            <person name="Weitzenegger T."/>
            <person name="Winters P."/>
            <person name="Wipat A."/>
            <person name="Yamamoto H."/>
            <person name="Yamane K."/>
            <person name="Yasumoto K."/>
            <person name="Yata K."/>
            <person name="Yoshida K."/>
            <person name="Yoshikawa H.-F."/>
            <person name="Zumstein E."/>
            <person name="Yoshikawa H."/>
            <person name="Danchin A."/>
        </authorList>
    </citation>
    <scope>NUCLEOTIDE SEQUENCE [LARGE SCALE GENOMIC DNA]</scope>
    <source>
        <strain>168</strain>
    </source>
</reference>
<protein>
    <recommendedName>
        <fullName>SPbeta prophage-derived uncharacterized protein YonG</fullName>
    </recommendedName>
</protein>
<proteinExistence type="predicted"/>
<organism>
    <name type="scientific">Bacillus subtilis (strain 168)</name>
    <dbReference type="NCBI Taxonomy" id="224308"/>
    <lineage>
        <taxon>Bacteria</taxon>
        <taxon>Bacillati</taxon>
        <taxon>Bacillota</taxon>
        <taxon>Bacilli</taxon>
        <taxon>Bacillales</taxon>
        <taxon>Bacillaceae</taxon>
        <taxon>Bacillus</taxon>
    </lineage>
</organism>
<feature type="chain" id="PRO_0000360540" description="SPbeta prophage-derived uncharacterized protein YonG">
    <location>
        <begin position="1"/>
        <end position="306"/>
    </location>
</feature>
<name>YONG_BACSU</name>
<accession>O31951</accession>
<dbReference type="EMBL" id="AL009126">
    <property type="protein sequence ID" value="CAB14028.1"/>
    <property type="molecule type" value="Genomic_DNA"/>
</dbReference>
<dbReference type="RefSeq" id="NP_389993.1">
    <property type="nucleotide sequence ID" value="NC_000964.3"/>
</dbReference>
<dbReference type="RefSeq" id="WP_004399257.1">
    <property type="nucleotide sequence ID" value="NZ_OZ025638.1"/>
</dbReference>
<dbReference type="SMR" id="O31951"/>
<dbReference type="FunCoup" id="O31951">
    <property type="interactions" value="171"/>
</dbReference>
<dbReference type="STRING" id="224308.BSU21100"/>
<dbReference type="PaxDb" id="224308-BSU21100"/>
<dbReference type="EnsemblBacteria" id="CAB14028">
    <property type="protein sequence ID" value="CAB14028"/>
    <property type="gene ID" value="BSU_21100"/>
</dbReference>
<dbReference type="GeneID" id="939165"/>
<dbReference type="KEGG" id="bsu:BSU21100"/>
<dbReference type="PATRIC" id="fig|224308.179.peg.2304"/>
<dbReference type="eggNOG" id="ENOG5032U56">
    <property type="taxonomic scope" value="Bacteria"/>
</dbReference>
<dbReference type="InParanoid" id="O31951"/>
<dbReference type="OrthoDB" id="1864014at2"/>
<dbReference type="BioCyc" id="BSUB:BSU21100-MONOMER"/>
<dbReference type="Proteomes" id="UP000001570">
    <property type="component" value="Chromosome"/>
</dbReference>
<keyword id="KW-1185">Reference proteome</keyword>
<sequence length="306" mass="35733">MSAEKIKCSCCGKEQNANQYYISESPFNSATGKLSVCKSCLQNEFQKDKDNLKNVQNILRMIDRPFVYDLWVSAVNESESKKKSAGNVLGTYMKNIGMKDYKSKTWADSEFDFEEEQEYTTQLLLAKSTEDISKEDIDELMQFWGRGLDVEDYIWLQNEYIDFTNRYECDSKGMELLINEICLTRLDIRKRRENGEKVDQQQKTLQDLLGSSNLKPVQETGASGVEQESFGTLIKKYENERPIPEPEPRWKDPDKIGKYIKVFFLGHLSRMLGLKNQYSEEYWEEMNKHTVEEPVAEEEDRENDLT</sequence>
<gene>
    <name type="primary">yonG</name>
    <name type="ordered locus">BSU21100</name>
</gene>